<sequence length="449" mass="50785">MPKPIVAIVGRPNVGKSTFFNRLIGERRAIVEDIPGTTRDRLYGDTFWNGREFTVVDTAGLLFGDEDPSLPEVEIARRTRVQAEHAIAEADAIIFMVDGRDGLTTADADVADILRTTAKPVVLAVNKCDSQERMLDAVEFYALNLGDPIPMSAFHGLGTGDVLDRLTEYFPPKTFEKDEERHLRVAIVGRPNVGKSSLLNRLLGKERSVVSPIPGTTRDPIDTTITYYGEPITLIDTAGIRRAGKIERGIEKYSVLRTLRAIERCDVAMLLVDATEGVTAQDTHIAGMVIEAKKGLILVVNKWDAITKDSQTYYEFEHRVREAFKFVDYAPIVFISALTGQRVSHLLDYAREIYAQRQKRIPTSELNNFLREVVVQQPPMAVKKGAHLRLYYAVQPQTEPPVFLFFANDSELVHWSYARYLENRLRERYGFQGTPIVIVFRSRERKEER</sequence>
<evidence type="ECO:0000255" key="1">
    <source>
        <dbReference type="HAMAP-Rule" id="MF_00195"/>
    </source>
</evidence>
<comment type="function">
    <text evidence="1">GTPase that plays an essential role in the late steps of ribosome biogenesis.</text>
</comment>
<comment type="subunit">
    <text evidence="1">Associates with the 50S ribosomal subunit.</text>
</comment>
<comment type="similarity">
    <text evidence="1">Belongs to the TRAFAC class TrmE-Era-EngA-EngB-Septin-like GTPase superfamily. EngA (Der) GTPase family.</text>
</comment>
<protein>
    <recommendedName>
        <fullName evidence="1">GTPase Der</fullName>
    </recommendedName>
    <alternativeName>
        <fullName evidence="1">GTP-binding protein EngA</fullName>
    </alternativeName>
</protein>
<organism>
    <name type="scientific">Chloroflexus aggregans (strain MD-66 / DSM 9485)</name>
    <dbReference type="NCBI Taxonomy" id="326427"/>
    <lineage>
        <taxon>Bacteria</taxon>
        <taxon>Bacillati</taxon>
        <taxon>Chloroflexota</taxon>
        <taxon>Chloroflexia</taxon>
        <taxon>Chloroflexales</taxon>
        <taxon>Chloroflexineae</taxon>
        <taxon>Chloroflexaceae</taxon>
        <taxon>Chloroflexus</taxon>
    </lineage>
</organism>
<proteinExistence type="inferred from homology"/>
<accession>B8GAY7</accession>
<keyword id="KW-0342">GTP-binding</keyword>
<keyword id="KW-0547">Nucleotide-binding</keyword>
<keyword id="KW-0677">Repeat</keyword>
<keyword id="KW-0690">Ribosome biogenesis</keyword>
<gene>
    <name evidence="1" type="primary">der</name>
    <name type="synonym">engA</name>
    <name type="ordered locus">Cagg_3751</name>
</gene>
<dbReference type="EMBL" id="CP001337">
    <property type="protein sequence ID" value="ACL26587.1"/>
    <property type="molecule type" value="Genomic_DNA"/>
</dbReference>
<dbReference type="RefSeq" id="WP_015942432.1">
    <property type="nucleotide sequence ID" value="NC_011831.1"/>
</dbReference>
<dbReference type="SMR" id="B8GAY7"/>
<dbReference type="STRING" id="326427.Cagg_3751"/>
<dbReference type="KEGG" id="cag:Cagg_3751"/>
<dbReference type="eggNOG" id="COG1160">
    <property type="taxonomic scope" value="Bacteria"/>
</dbReference>
<dbReference type="HOGENOM" id="CLU_016077_6_2_0"/>
<dbReference type="OrthoDB" id="9805918at2"/>
<dbReference type="Proteomes" id="UP000002508">
    <property type="component" value="Chromosome"/>
</dbReference>
<dbReference type="GO" id="GO:0016887">
    <property type="term" value="F:ATP hydrolysis activity"/>
    <property type="evidence" value="ECO:0007669"/>
    <property type="project" value="InterPro"/>
</dbReference>
<dbReference type="GO" id="GO:0005525">
    <property type="term" value="F:GTP binding"/>
    <property type="evidence" value="ECO:0007669"/>
    <property type="project" value="UniProtKB-UniRule"/>
</dbReference>
<dbReference type="GO" id="GO:0043022">
    <property type="term" value="F:ribosome binding"/>
    <property type="evidence" value="ECO:0007669"/>
    <property type="project" value="TreeGrafter"/>
</dbReference>
<dbReference type="GO" id="GO:0042254">
    <property type="term" value="P:ribosome biogenesis"/>
    <property type="evidence" value="ECO:0007669"/>
    <property type="project" value="UniProtKB-KW"/>
</dbReference>
<dbReference type="CDD" id="cd01894">
    <property type="entry name" value="EngA1"/>
    <property type="match status" value="1"/>
</dbReference>
<dbReference type="CDD" id="cd01895">
    <property type="entry name" value="EngA2"/>
    <property type="match status" value="1"/>
</dbReference>
<dbReference type="FunFam" id="3.30.300.20:FF:000004">
    <property type="entry name" value="GTPase Der"/>
    <property type="match status" value="1"/>
</dbReference>
<dbReference type="FunFam" id="3.40.50.300:FF:000040">
    <property type="entry name" value="GTPase Der"/>
    <property type="match status" value="1"/>
</dbReference>
<dbReference type="FunFam" id="3.40.50.300:FF:000057">
    <property type="entry name" value="GTPase Der"/>
    <property type="match status" value="1"/>
</dbReference>
<dbReference type="Gene3D" id="3.30.300.20">
    <property type="match status" value="1"/>
</dbReference>
<dbReference type="Gene3D" id="3.40.50.300">
    <property type="entry name" value="P-loop containing nucleotide triphosphate hydrolases"/>
    <property type="match status" value="2"/>
</dbReference>
<dbReference type="HAMAP" id="MF_00195">
    <property type="entry name" value="GTPase_Der"/>
    <property type="match status" value="1"/>
</dbReference>
<dbReference type="InterPro" id="IPR003593">
    <property type="entry name" value="AAA+_ATPase"/>
</dbReference>
<dbReference type="InterPro" id="IPR031166">
    <property type="entry name" value="G_ENGA"/>
</dbReference>
<dbReference type="InterPro" id="IPR006073">
    <property type="entry name" value="GTP-bd"/>
</dbReference>
<dbReference type="InterPro" id="IPR016484">
    <property type="entry name" value="GTPase_Der"/>
</dbReference>
<dbReference type="InterPro" id="IPR032859">
    <property type="entry name" value="KH_dom-like"/>
</dbReference>
<dbReference type="InterPro" id="IPR015946">
    <property type="entry name" value="KH_dom-like_a/b"/>
</dbReference>
<dbReference type="InterPro" id="IPR027417">
    <property type="entry name" value="P-loop_NTPase"/>
</dbReference>
<dbReference type="InterPro" id="IPR005225">
    <property type="entry name" value="Small_GTP-bd"/>
</dbReference>
<dbReference type="NCBIfam" id="TIGR03594">
    <property type="entry name" value="GTPase_EngA"/>
    <property type="match status" value="1"/>
</dbReference>
<dbReference type="NCBIfam" id="TIGR00231">
    <property type="entry name" value="small_GTP"/>
    <property type="match status" value="2"/>
</dbReference>
<dbReference type="PANTHER" id="PTHR43834">
    <property type="entry name" value="GTPASE DER"/>
    <property type="match status" value="1"/>
</dbReference>
<dbReference type="PANTHER" id="PTHR43834:SF6">
    <property type="entry name" value="GTPASE DER"/>
    <property type="match status" value="1"/>
</dbReference>
<dbReference type="Pfam" id="PF14714">
    <property type="entry name" value="KH_dom-like"/>
    <property type="match status" value="1"/>
</dbReference>
<dbReference type="Pfam" id="PF01926">
    <property type="entry name" value="MMR_HSR1"/>
    <property type="match status" value="2"/>
</dbReference>
<dbReference type="PIRSF" id="PIRSF006485">
    <property type="entry name" value="GTP-binding_EngA"/>
    <property type="match status" value="1"/>
</dbReference>
<dbReference type="PRINTS" id="PR00326">
    <property type="entry name" value="GTP1OBG"/>
</dbReference>
<dbReference type="SMART" id="SM00382">
    <property type="entry name" value="AAA"/>
    <property type="match status" value="2"/>
</dbReference>
<dbReference type="SUPFAM" id="SSF52540">
    <property type="entry name" value="P-loop containing nucleoside triphosphate hydrolases"/>
    <property type="match status" value="2"/>
</dbReference>
<dbReference type="PROSITE" id="PS51712">
    <property type="entry name" value="G_ENGA"/>
    <property type="match status" value="2"/>
</dbReference>
<reference key="1">
    <citation type="submission" date="2008-12" db="EMBL/GenBank/DDBJ databases">
        <title>Complete sequence of Chloroflexus aggregans DSM 9485.</title>
        <authorList>
            <consortium name="US DOE Joint Genome Institute"/>
            <person name="Lucas S."/>
            <person name="Copeland A."/>
            <person name="Lapidus A."/>
            <person name="Glavina del Rio T."/>
            <person name="Dalin E."/>
            <person name="Tice H."/>
            <person name="Pitluck S."/>
            <person name="Foster B."/>
            <person name="Larimer F."/>
            <person name="Land M."/>
            <person name="Hauser L."/>
            <person name="Kyrpides N."/>
            <person name="Mikhailova N."/>
            <person name="Bryant D.A."/>
            <person name="Richardson P."/>
        </authorList>
    </citation>
    <scope>NUCLEOTIDE SEQUENCE [LARGE SCALE GENOMIC DNA]</scope>
    <source>
        <strain>MD-66 / DSM 9485</strain>
    </source>
</reference>
<name>DER_CHLAD</name>
<feature type="chain" id="PRO_1000124348" description="GTPase Der">
    <location>
        <begin position="1"/>
        <end position="449"/>
    </location>
</feature>
<feature type="domain" description="EngA-type G 1">
    <location>
        <begin position="4"/>
        <end position="174"/>
    </location>
</feature>
<feature type="domain" description="EngA-type G 2">
    <location>
        <begin position="183"/>
        <end position="358"/>
    </location>
</feature>
<feature type="domain" description="KH-like" evidence="1">
    <location>
        <begin position="359"/>
        <end position="444"/>
    </location>
</feature>
<feature type="binding site" evidence="1">
    <location>
        <begin position="10"/>
        <end position="17"/>
    </location>
    <ligand>
        <name>GTP</name>
        <dbReference type="ChEBI" id="CHEBI:37565"/>
        <label>1</label>
    </ligand>
</feature>
<feature type="binding site" evidence="1">
    <location>
        <begin position="57"/>
        <end position="61"/>
    </location>
    <ligand>
        <name>GTP</name>
        <dbReference type="ChEBI" id="CHEBI:37565"/>
        <label>1</label>
    </ligand>
</feature>
<feature type="binding site" evidence="1">
    <location>
        <begin position="126"/>
        <end position="129"/>
    </location>
    <ligand>
        <name>GTP</name>
        <dbReference type="ChEBI" id="CHEBI:37565"/>
        <label>1</label>
    </ligand>
</feature>
<feature type="binding site" evidence="1">
    <location>
        <begin position="189"/>
        <end position="196"/>
    </location>
    <ligand>
        <name>GTP</name>
        <dbReference type="ChEBI" id="CHEBI:37565"/>
        <label>2</label>
    </ligand>
</feature>
<feature type="binding site" evidence="1">
    <location>
        <begin position="236"/>
        <end position="240"/>
    </location>
    <ligand>
        <name>GTP</name>
        <dbReference type="ChEBI" id="CHEBI:37565"/>
        <label>2</label>
    </ligand>
</feature>
<feature type="binding site" evidence="1">
    <location>
        <begin position="301"/>
        <end position="304"/>
    </location>
    <ligand>
        <name>GTP</name>
        <dbReference type="ChEBI" id="CHEBI:37565"/>
        <label>2</label>
    </ligand>
</feature>